<keyword id="KW-1003">Cell membrane</keyword>
<keyword id="KW-0472">Membrane</keyword>
<keyword id="KW-1185">Reference proteome</keyword>
<keyword id="KW-0749">Sporulation</keyword>
<keyword id="KW-0812">Transmembrane</keyword>
<keyword id="KW-1133">Transmembrane helix</keyword>
<gene>
    <name type="primary">spoVAF</name>
    <name type="ordered locus">BSU23390</name>
</gene>
<dbReference type="EMBL" id="D84432">
    <property type="protein sequence ID" value="BAA12661.1"/>
    <property type="molecule type" value="Genomic_DNA"/>
</dbReference>
<dbReference type="EMBL" id="AL009126">
    <property type="protein sequence ID" value="CAB14271.2"/>
    <property type="molecule type" value="Genomic_DNA"/>
</dbReference>
<dbReference type="EMBL" id="L09228">
    <property type="protein sequence ID" value="AAA67472.1"/>
    <property type="molecule type" value="Genomic_DNA"/>
</dbReference>
<dbReference type="EMBL" id="D90189">
    <property type="protein sequence ID" value="BAA14210.1"/>
    <property type="molecule type" value="Genomic_DNA"/>
</dbReference>
<dbReference type="EMBL" id="M15349">
    <property type="status" value="NOT_ANNOTATED_CDS"/>
    <property type="molecule type" value="Genomic_DNA"/>
</dbReference>
<dbReference type="PIR" id="A69715">
    <property type="entry name" value="A69715"/>
</dbReference>
<dbReference type="RefSeq" id="NP_390220.2">
    <property type="nucleotide sequence ID" value="NC_000964.3"/>
</dbReference>
<dbReference type="RefSeq" id="WP_003230471.1">
    <property type="nucleotide sequence ID" value="NZ_OZ025638.1"/>
</dbReference>
<dbReference type="RefSeq" id="WP_009967659.1">
    <property type="nucleotide sequence ID" value="NZ_CM000487.1"/>
</dbReference>
<dbReference type="SMR" id="P31845"/>
<dbReference type="FunCoup" id="P31845">
    <property type="interactions" value="78"/>
</dbReference>
<dbReference type="STRING" id="224308.BSU23390"/>
<dbReference type="TCDB" id="1.A.134.1.5">
    <property type="family name" value="the nutrient-sensing ion-conducting pore-forming-geraa (nip-geraa) family"/>
</dbReference>
<dbReference type="TCDB" id="9.A.11.1.1">
    <property type="family name" value="the dipicolinic acid transporter (dpa-t) family"/>
</dbReference>
<dbReference type="PaxDb" id="224308-BSU23390"/>
<dbReference type="EnsemblBacteria" id="CAB14271">
    <property type="protein sequence ID" value="CAB14271"/>
    <property type="gene ID" value="BSU_23390"/>
</dbReference>
<dbReference type="GeneID" id="938936"/>
<dbReference type="KEGG" id="bsu:BSU23390"/>
<dbReference type="PATRIC" id="fig|224308.179.peg.2548"/>
<dbReference type="eggNOG" id="COG0697">
    <property type="taxonomic scope" value="Bacteria"/>
</dbReference>
<dbReference type="InParanoid" id="P31845"/>
<dbReference type="OrthoDB" id="9772630at2"/>
<dbReference type="PhylomeDB" id="P31845"/>
<dbReference type="BioCyc" id="BSUB:BSU23390-MONOMER"/>
<dbReference type="Proteomes" id="UP000001570">
    <property type="component" value="Chromosome"/>
</dbReference>
<dbReference type="GO" id="GO:0005886">
    <property type="term" value="C:plasma membrane"/>
    <property type="evidence" value="ECO:0007669"/>
    <property type="project" value="UniProtKB-SubCell"/>
</dbReference>
<dbReference type="GO" id="GO:0009847">
    <property type="term" value="P:spore germination"/>
    <property type="evidence" value="ECO:0007669"/>
    <property type="project" value="InterPro"/>
</dbReference>
<dbReference type="GO" id="GO:0030435">
    <property type="term" value="P:sporulation resulting in formation of a cellular spore"/>
    <property type="evidence" value="ECO:0007669"/>
    <property type="project" value="UniProtKB-KW"/>
</dbReference>
<dbReference type="InterPro" id="IPR004995">
    <property type="entry name" value="Spore_Ger"/>
</dbReference>
<dbReference type="InterPro" id="IPR050768">
    <property type="entry name" value="UPF0353/GerABKA_families"/>
</dbReference>
<dbReference type="PANTHER" id="PTHR22550">
    <property type="entry name" value="SPORE GERMINATION PROTEIN"/>
    <property type="match status" value="1"/>
</dbReference>
<dbReference type="PANTHER" id="PTHR22550:SF9">
    <property type="entry name" value="STAGE V SPORULATION PROTEIN AF"/>
    <property type="match status" value="1"/>
</dbReference>
<dbReference type="Pfam" id="PF03323">
    <property type="entry name" value="GerA"/>
    <property type="match status" value="1"/>
</dbReference>
<dbReference type="PIRSF" id="PIRSF005690">
    <property type="entry name" value="GerBA"/>
    <property type="match status" value="1"/>
</dbReference>
<protein>
    <recommendedName>
        <fullName>Stage V sporulation protein AF</fullName>
    </recommendedName>
</protein>
<reference key="1">
    <citation type="journal article" date="1996" name="Microbiology">
        <title>Systematic sequencing of the 283 kb 210 degrees-232 degrees region of the Bacillus subtilis genome containing the skin element and many sporulation genes.</title>
        <authorList>
            <person name="Mizuno M."/>
            <person name="Masuda S."/>
            <person name="Takemaru K."/>
            <person name="Hosono S."/>
            <person name="Sato T."/>
            <person name="Takeuchi M."/>
            <person name="Kobayashi Y."/>
        </authorList>
    </citation>
    <scope>NUCLEOTIDE SEQUENCE [GENOMIC DNA]</scope>
    <source>
        <strain>168 / JH642</strain>
    </source>
</reference>
<reference key="2">
    <citation type="journal article" date="1997" name="Nature">
        <title>The complete genome sequence of the Gram-positive bacterium Bacillus subtilis.</title>
        <authorList>
            <person name="Kunst F."/>
            <person name="Ogasawara N."/>
            <person name="Moszer I."/>
            <person name="Albertini A.M."/>
            <person name="Alloni G."/>
            <person name="Azevedo V."/>
            <person name="Bertero M.G."/>
            <person name="Bessieres P."/>
            <person name="Bolotin A."/>
            <person name="Borchert S."/>
            <person name="Borriss R."/>
            <person name="Boursier L."/>
            <person name="Brans A."/>
            <person name="Braun M."/>
            <person name="Brignell S.C."/>
            <person name="Bron S."/>
            <person name="Brouillet S."/>
            <person name="Bruschi C.V."/>
            <person name="Caldwell B."/>
            <person name="Capuano V."/>
            <person name="Carter N.M."/>
            <person name="Choi S.-K."/>
            <person name="Codani J.-J."/>
            <person name="Connerton I.F."/>
            <person name="Cummings N.J."/>
            <person name="Daniel R.A."/>
            <person name="Denizot F."/>
            <person name="Devine K.M."/>
            <person name="Duesterhoeft A."/>
            <person name="Ehrlich S.D."/>
            <person name="Emmerson P.T."/>
            <person name="Entian K.-D."/>
            <person name="Errington J."/>
            <person name="Fabret C."/>
            <person name="Ferrari E."/>
            <person name="Foulger D."/>
            <person name="Fritz C."/>
            <person name="Fujita M."/>
            <person name="Fujita Y."/>
            <person name="Fuma S."/>
            <person name="Galizzi A."/>
            <person name="Galleron N."/>
            <person name="Ghim S.-Y."/>
            <person name="Glaser P."/>
            <person name="Goffeau A."/>
            <person name="Golightly E.J."/>
            <person name="Grandi G."/>
            <person name="Guiseppi G."/>
            <person name="Guy B.J."/>
            <person name="Haga K."/>
            <person name="Haiech J."/>
            <person name="Harwood C.R."/>
            <person name="Henaut A."/>
            <person name="Hilbert H."/>
            <person name="Holsappel S."/>
            <person name="Hosono S."/>
            <person name="Hullo M.-F."/>
            <person name="Itaya M."/>
            <person name="Jones L.-M."/>
            <person name="Joris B."/>
            <person name="Karamata D."/>
            <person name="Kasahara Y."/>
            <person name="Klaerr-Blanchard M."/>
            <person name="Klein C."/>
            <person name="Kobayashi Y."/>
            <person name="Koetter P."/>
            <person name="Koningstein G."/>
            <person name="Krogh S."/>
            <person name="Kumano M."/>
            <person name="Kurita K."/>
            <person name="Lapidus A."/>
            <person name="Lardinois S."/>
            <person name="Lauber J."/>
            <person name="Lazarevic V."/>
            <person name="Lee S.-M."/>
            <person name="Levine A."/>
            <person name="Liu H."/>
            <person name="Masuda S."/>
            <person name="Mauel C."/>
            <person name="Medigue C."/>
            <person name="Medina N."/>
            <person name="Mellado R.P."/>
            <person name="Mizuno M."/>
            <person name="Moestl D."/>
            <person name="Nakai S."/>
            <person name="Noback M."/>
            <person name="Noone D."/>
            <person name="O'Reilly M."/>
            <person name="Ogawa K."/>
            <person name="Ogiwara A."/>
            <person name="Oudega B."/>
            <person name="Park S.-H."/>
            <person name="Parro V."/>
            <person name="Pohl T.M."/>
            <person name="Portetelle D."/>
            <person name="Porwollik S."/>
            <person name="Prescott A.M."/>
            <person name="Presecan E."/>
            <person name="Pujic P."/>
            <person name="Purnelle B."/>
            <person name="Rapoport G."/>
            <person name="Rey M."/>
            <person name="Reynolds S."/>
            <person name="Rieger M."/>
            <person name="Rivolta C."/>
            <person name="Rocha E."/>
            <person name="Roche B."/>
            <person name="Rose M."/>
            <person name="Sadaie Y."/>
            <person name="Sato T."/>
            <person name="Scanlan E."/>
            <person name="Schleich S."/>
            <person name="Schroeter R."/>
            <person name="Scoffone F."/>
            <person name="Sekiguchi J."/>
            <person name="Sekowska A."/>
            <person name="Seror S.J."/>
            <person name="Serror P."/>
            <person name="Shin B.-S."/>
            <person name="Soldo B."/>
            <person name="Sorokin A."/>
            <person name="Tacconi E."/>
            <person name="Takagi T."/>
            <person name="Takahashi H."/>
            <person name="Takemaru K."/>
            <person name="Takeuchi M."/>
            <person name="Tamakoshi A."/>
            <person name="Tanaka T."/>
            <person name="Terpstra P."/>
            <person name="Tognoni A."/>
            <person name="Tosato V."/>
            <person name="Uchiyama S."/>
            <person name="Vandenbol M."/>
            <person name="Vannier F."/>
            <person name="Vassarotti A."/>
            <person name="Viari A."/>
            <person name="Wambutt R."/>
            <person name="Wedler E."/>
            <person name="Wedler H."/>
            <person name="Weitzenegger T."/>
            <person name="Winters P."/>
            <person name="Wipat A."/>
            <person name="Yamamoto H."/>
            <person name="Yamane K."/>
            <person name="Yasumoto K."/>
            <person name="Yata K."/>
            <person name="Yoshida K."/>
            <person name="Yoshikawa H.-F."/>
            <person name="Zumstein E."/>
            <person name="Yoshikawa H."/>
            <person name="Danchin A."/>
        </authorList>
    </citation>
    <scope>NUCLEOTIDE SEQUENCE [LARGE SCALE GENOMIC DNA]</scope>
    <source>
        <strain>168</strain>
    </source>
</reference>
<reference key="3">
    <citation type="journal article" date="2009" name="Microbiology">
        <title>From a consortium sequence to a unified sequence: the Bacillus subtilis 168 reference genome a decade later.</title>
        <authorList>
            <person name="Barbe V."/>
            <person name="Cruveiller S."/>
            <person name="Kunst F."/>
            <person name="Lenoble P."/>
            <person name="Meurice G."/>
            <person name="Sekowska A."/>
            <person name="Vallenet D."/>
            <person name="Wang T."/>
            <person name="Moszer I."/>
            <person name="Medigue C."/>
            <person name="Danchin A."/>
        </authorList>
    </citation>
    <scope>SEQUENCE REVISION TO 410-438</scope>
</reference>
<reference key="4">
    <citation type="journal article" date="1993" name="Mol. Microbiol.">
        <title>The organization of the Bacillus subtilis 168 chromosome region between the spoVA and serA genetic loci, based on sequence data.</title>
        <authorList>
            <person name="Sorokin A.V."/>
            <person name="Zumstein E."/>
            <person name="Azevedo V."/>
            <person name="Ehrlich S.D."/>
            <person name="Serror P."/>
        </authorList>
    </citation>
    <scope>NUCLEOTIDE SEQUENCE [GENOMIC DNA] OF 81-493</scope>
    <source>
        <strain>168 / Marburg / ATCC 6051 / DSM 10 / JCM 1465 / NBRC 13719 / NCIMB 3610 / NRRL NRS-744 / VKM B-501</strain>
    </source>
</reference>
<reference key="5">
    <citation type="journal article" date="1991" name="Agric. Biol. Chem.">
        <title>Molecular cloning and analysis of nucleotide sequence of the Bacillus subtilis lysA gene region using B. subtilis phage vectors and a multi-copy plasmid, pUB110.</title>
        <authorList>
            <person name="Yamamoto J."/>
            <person name="Shimizu M."/>
            <person name="Yamane K."/>
        </authorList>
    </citation>
    <scope>NUCLEOTIDE SEQUENCE [GENOMIC DNA] OF 223-493</scope>
</reference>
<reference key="6">
    <citation type="journal article" date="1985" name="J. Gen. Microbiol.">
        <title>Nucleotide sequence and complementation analysis of a polycistronic sporulation operon, spoVA, in Bacillus subtilis.</title>
        <authorList>
            <person name="Fort P."/>
            <person name="Errington J."/>
        </authorList>
    </citation>
    <scope>NUCLEOTIDE SEQUENCE [GENOMIC DNA] OF 1-82</scope>
</reference>
<accession>P31845</accession>
<name>SP5AF_BACSU</name>
<comment type="subcellular location">
    <subcellularLocation>
        <location evidence="2">Cell membrane</location>
        <topology evidence="2">Multi-pass membrane protein</topology>
    </subcellularLocation>
</comment>
<comment type="similarity">
    <text evidence="2">Belongs to the GerABKA family.</text>
</comment>
<organism>
    <name type="scientific">Bacillus subtilis (strain 168)</name>
    <dbReference type="NCBI Taxonomy" id="224308"/>
    <lineage>
        <taxon>Bacteria</taxon>
        <taxon>Bacillati</taxon>
        <taxon>Bacillota</taxon>
        <taxon>Bacilli</taxon>
        <taxon>Bacillales</taxon>
        <taxon>Bacillaceae</taxon>
        <taxon>Bacillus</taxon>
    </lineage>
</organism>
<evidence type="ECO:0000255" key="1"/>
<evidence type="ECO:0000305" key="2"/>
<feature type="chain" id="PRO_0000164019" description="Stage V sporulation protein AF">
    <location>
        <begin position="1"/>
        <end position="493"/>
    </location>
</feature>
<feature type="transmembrane region" description="Helical" evidence="1">
    <location>
        <begin position="296"/>
        <end position="316"/>
    </location>
</feature>
<feature type="transmembrane region" description="Helical" evidence="1">
    <location>
        <begin position="334"/>
        <end position="354"/>
    </location>
</feature>
<feature type="transmembrane region" description="Helical" evidence="1">
    <location>
        <begin position="363"/>
        <end position="383"/>
    </location>
</feature>
<feature type="transmembrane region" description="Helical" evidence="1">
    <location>
        <begin position="387"/>
        <end position="407"/>
    </location>
</feature>
<feature type="transmembrane region" description="Helical" evidence="1">
    <location>
        <begin position="418"/>
        <end position="438"/>
    </location>
</feature>
<feature type="sequence conflict" description="In Ref. 1; BAA12661 and 4; AAA67472." evidence="2" ref="1 4">
    <original>NKMSRLVLMILVALFHIKGLVIGFTVLII</original>
    <variation>TNEPSCPHDTRCFISYKRARHRIYSANY</variation>
    <location>
        <begin position="410"/>
        <end position="438"/>
    </location>
</feature>
<feature type="sequence conflict" description="In Ref. 5; BAA14210." evidence="2" ref="5">
    <original>NKMSRLVLMILVALFHIKGLVIGFTVLII</original>
    <variation>TNEPSCPHDTRCFISYKRARHRLYSANY</variation>
    <location>
        <begin position="410"/>
        <end position="438"/>
    </location>
</feature>
<feature type="sequence conflict" description="In Ref. 5; BAA14210." evidence="2" ref="5">
    <original>R</original>
    <variation>P</variation>
    <location>
        <position position="468"/>
    </location>
</feature>
<sequence>MPDHKEEKIRVYRNPAKNEEYFKNRVGMGTSYDVGVRKLTILDKEIQLYYLNGLCDTAYIIHLMRELVAINNRKEDPDELVDIVENRLLNAQVEKVKTLDETTDQVLSGLVAVIVEGAGFAFIIDVRSYPGRNPEEPDTEKVVRGARDGFVENIVVNTALLRRRIRDERLRVKMTKVGERSKTDLSICYIEDIADPDLVEIVEKEIASIDVDGLTMADKTVEEFIVNQSYNPFPLVRYTERPDVAANHVLEGHVIIIVDTSPSVIITPTTLFHHVQHAEEYRQAPSVGTFLRWVRFFGILASTLFLPIWFLFVLQPDLLPDNMKFIGLNKDTHIPIILQIFLADLGIEFLRMAAIHTPTALSTAMGLIAAVLIGQIAIEVGLFSPEVILYVSLAAIGTFTTPSYELSLANKMSRLVLMILVALFHIKGLVIGFTVLIIAMASIKSLQTPYLWPLIPFNGKALWQVLVRTAKPGAKVRPSIVHPKNRLRQPTNS</sequence>
<proteinExistence type="inferred from homology"/>